<protein>
    <recommendedName>
        <fullName evidence="1">Small ribosomal subunit protein uS2B</fullName>
    </recommendedName>
    <alternativeName>
        <fullName evidence="1">37 kDa laminin receptor precursor</fullName>
        <shortName evidence="1">37LRP</shortName>
    </alternativeName>
    <alternativeName>
        <fullName evidence="1">37/67 kDa laminin receptor</fullName>
        <shortName evidence="1">LRP/LR</shortName>
    </alternativeName>
    <alternativeName>
        <fullName evidence="4">40S ribosomal protein SA</fullName>
    </alternativeName>
    <alternativeName>
        <fullName evidence="4">40S ribosomal protein SA2</fullName>
    </alternativeName>
    <alternativeName>
        <fullName evidence="1">67 kDa laminin receptor</fullName>
        <shortName evidence="1">67LR</shortName>
    </alternativeName>
    <alternativeName>
        <fullName evidence="1">Laminin receptor 1</fullName>
        <shortName evidence="1">LamR</shortName>
    </alternativeName>
    <alternativeName>
        <fullName evidence="1">Laminin-binding protein precursor p40</fullName>
        <shortName evidence="1">LBP/p40</shortName>
    </alternativeName>
</protein>
<evidence type="ECO:0000255" key="1">
    <source>
        <dbReference type="HAMAP-Rule" id="MF_03016"/>
    </source>
</evidence>
<evidence type="ECO:0000255" key="2">
    <source>
        <dbReference type="RuleBase" id="RU003631"/>
    </source>
</evidence>
<evidence type="ECO:0000256" key="3">
    <source>
        <dbReference type="SAM" id="MobiDB-lite"/>
    </source>
</evidence>
<evidence type="ECO:0000305" key="4"/>
<evidence type="ECO:0000312" key="5">
    <source>
        <dbReference type="HGNC" id="HGNC:36809"/>
    </source>
</evidence>
<name>RPSA2_HUMAN</name>
<dbReference type="EMBL" id="AC139769">
    <property type="status" value="NOT_ANNOTATED_CDS"/>
    <property type="molecule type" value="Genomic_DNA"/>
</dbReference>
<dbReference type="EMBL" id="KF459809">
    <property type="status" value="NOT_ANNOTATED_CDS"/>
    <property type="molecule type" value="Genomic_DNA"/>
</dbReference>
<dbReference type="EMBL" id="KF459812">
    <property type="status" value="NOT_ANNOTATED_CDS"/>
    <property type="molecule type" value="Genomic_DNA"/>
</dbReference>
<dbReference type="EMBL" id="KF459815">
    <property type="status" value="NOT_ANNOTATED_CDS"/>
    <property type="molecule type" value="Genomic_DNA"/>
</dbReference>
<dbReference type="EMBL" id="KF459820">
    <property type="status" value="NOT_ANNOTATED_CDS"/>
    <property type="molecule type" value="Genomic_DNA"/>
</dbReference>
<dbReference type="EMBL" id="KF495804">
    <property type="status" value="NOT_ANNOTATED_CDS"/>
    <property type="molecule type" value="Genomic_DNA"/>
</dbReference>
<dbReference type="CCDS" id="CCDS92575.1"/>
<dbReference type="RefSeq" id="NP_001342212.1">
    <property type="nucleotide sequence ID" value="NM_001355283.3"/>
</dbReference>
<dbReference type="RefSeq" id="NP_001342216.1">
    <property type="nucleotide sequence ID" value="NM_001355287.3"/>
</dbReference>
<dbReference type="RefSeq" id="NP_001374774.1">
    <property type="nucleotide sequence ID" value="NM_001387845.1"/>
</dbReference>
<dbReference type="RefSeq" id="NP_001374775.1">
    <property type="nucleotide sequence ID" value="NM_001387846.1"/>
</dbReference>
<dbReference type="SMR" id="A0A8I5KQE6"/>
<dbReference type="IntAct" id="A0A8I5KQE6">
    <property type="interactions" value="147"/>
</dbReference>
<dbReference type="jPOST" id="A0A8I5KQE6"/>
<dbReference type="PeptideAtlas" id="A0A8I5KQE6"/>
<dbReference type="Ensembl" id="ENST00000484897.4">
    <property type="protein sequence ID" value="ENSP00000509526.1"/>
    <property type="gene ID" value="ENSG00000288920.1"/>
</dbReference>
<dbReference type="GeneID" id="388524"/>
<dbReference type="MANE-Select" id="ENST00000484897.4">
    <property type="protein sequence ID" value="ENSP00000509526.1"/>
    <property type="RefSeq nucleotide sequence ID" value="NM_001355283.3"/>
    <property type="RefSeq protein sequence ID" value="NP_001342212.1"/>
</dbReference>
<dbReference type="AGR" id="HGNC:36809"/>
<dbReference type="GeneCards" id="RPSA2"/>
<dbReference type="HGNC" id="HGNC:36809">
    <property type="gene designation" value="RPSA2"/>
</dbReference>
<dbReference type="GeneTree" id="ENSGT00950000183099"/>
<dbReference type="PRO" id="PR:A0A8I5KQE6"/>
<dbReference type="Proteomes" id="UP000005640">
    <property type="component" value="Chromosome 19"/>
</dbReference>
<dbReference type="GO" id="GO:0022627">
    <property type="term" value="C:cytosolic small ribosomal subunit"/>
    <property type="evidence" value="ECO:0000318"/>
    <property type="project" value="GO_Central"/>
</dbReference>
<dbReference type="GO" id="GO:0005634">
    <property type="term" value="C:nucleus"/>
    <property type="evidence" value="ECO:0007669"/>
    <property type="project" value="UniProtKB-SubCell"/>
</dbReference>
<dbReference type="GO" id="GO:0005886">
    <property type="term" value="C:plasma membrane"/>
    <property type="evidence" value="ECO:0007669"/>
    <property type="project" value="UniProtKB-SubCell"/>
</dbReference>
<dbReference type="GO" id="GO:0043236">
    <property type="term" value="F:laminin binding"/>
    <property type="evidence" value="ECO:0007669"/>
    <property type="project" value="UniProtKB-UniRule"/>
</dbReference>
<dbReference type="GO" id="GO:0005055">
    <property type="term" value="F:laminin receptor activity"/>
    <property type="evidence" value="ECO:0007669"/>
    <property type="project" value="UniProtKB-UniRule"/>
</dbReference>
<dbReference type="GO" id="GO:0003735">
    <property type="term" value="F:structural constituent of ribosome"/>
    <property type="evidence" value="ECO:0000318"/>
    <property type="project" value="GO_Central"/>
</dbReference>
<dbReference type="GO" id="GO:0002181">
    <property type="term" value="P:cytoplasmic translation"/>
    <property type="evidence" value="ECO:0000318"/>
    <property type="project" value="GO_Central"/>
</dbReference>
<dbReference type="GO" id="GO:0000028">
    <property type="term" value="P:ribosomal small subunit assembly"/>
    <property type="evidence" value="ECO:0000318"/>
    <property type="project" value="GO_Central"/>
</dbReference>
<dbReference type="CDD" id="cd01425">
    <property type="entry name" value="RPS2"/>
    <property type="match status" value="1"/>
</dbReference>
<dbReference type="FunFam" id="3.40.50.10490:FF:000012">
    <property type="entry name" value="40S ribosomal protein SA"/>
    <property type="match status" value="1"/>
</dbReference>
<dbReference type="Gene3D" id="3.40.50.10490">
    <property type="entry name" value="Glucose-6-phosphate isomerase like protein, domain 1"/>
    <property type="match status" value="1"/>
</dbReference>
<dbReference type="HAMAP" id="MF_03015">
    <property type="entry name" value="Ribosomal_S2_euk"/>
    <property type="match status" value="1"/>
</dbReference>
<dbReference type="HAMAP" id="MF_03016">
    <property type="entry name" value="Ribosomal_S2_laminin_receptor"/>
    <property type="match status" value="1"/>
</dbReference>
<dbReference type="InterPro" id="IPR001865">
    <property type="entry name" value="Ribosomal_uS2"/>
</dbReference>
<dbReference type="InterPro" id="IPR032281">
    <property type="entry name" value="Ribosomal_uS2_C"/>
</dbReference>
<dbReference type="InterPro" id="IPR018130">
    <property type="entry name" value="Ribosomal_uS2_CS"/>
</dbReference>
<dbReference type="InterPro" id="IPR027498">
    <property type="entry name" value="Ribosomal_uS2_euk"/>
</dbReference>
<dbReference type="InterPro" id="IPR005707">
    <property type="entry name" value="Ribosomal_uS2_euk/arc"/>
</dbReference>
<dbReference type="InterPro" id="IPR023591">
    <property type="entry name" value="Ribosomal_uS2_flav_dom_sf"/>
</dbReference>
<dbReference type="InterPro" id="IPR027504">
    <property type="entry name" value="Ribosomal_uS2_vert"/>
</dbReference>
<dbReference type="NCBIfam" id="TIGR01012">
    <property type="entry name" value="uS2_euk_arch"/>
    <property type="match status" value="1"/>
</dbReference>
<dbReference type="PANTHER" id="PTHR11489">
    <property type="entry name" value="40S RIBOSOMAL PROTEIN SA"/>
    <property type="match status" value="1"/>
</dbReference>
<dbReference type="Pfam" id="PF16122">
    <property type="entry name" value="40S_SA_C"/>
    <property type="match status" value="1"/>
</dbReference>
<dbReference type="Pfam" id="PF00318">
    <property type="entry name" value="Ribosomal_S2"/>
    <property type="match status" value="2"/>
</dbReference>
<dbReference type="PRINTS" id="PR00395">
    <property type="entry name" value="RIBOSOMALS2"/>
</dbReference>
<dbReference type="SUPFAM" id="SSF52313">
    <property type="entry name" value="Ribosomal protein S2"/>
    <property type="match status" value="1"/>
</dbReference>
<dbReference type="PROSITE" id="PS00962">
    <property type="entry name" value="RIBOSOMAL_S2_1"/>
    <property type="match status" value="1"/>
</dbReference>
<dbReference type="PROSITE" id="PS00963">
    <property type="entry name" value="RIBOSOMAL_S2_2"/>
    <property type="match status" value="1"/>
</dbReference>
<comment type="function">
    <text evidence="1">Required for the assembly and/or stability of the 40S ribosomal subunit. Required for the processing of the 20S rRNA-precursor to mature 18S rRNA in a late step of the maturation of 40S ribosomal subunits. Also functions as a cell surface receptor for laminin. Plays a role in cell adhesion to the basement membrane and in the consequent activation of signaling transduction pathways. May play a role in cell fate determination and tissue morphogenesis. Also acts as a receptor for several other ligands, including the pathogenic prion protein, viruses, and bacteria. Acts as a PPP1R16B-dependent substrate of PPP1CA.</text>
</comment>
<comment type="subunit">
    <text evidence="1">Monomer (37LRP) and homodimer (67LR). Component of the small ribosomal subunit. Mature ribosomes consist of a small (40S) and a large (60S) subunit. The 40S subunit contains about 33 different proteins and 1 molecule of RNA (18S). The 60S subunit contains about 49 different proteins and 3 molecules of RNA (28S, 5.8S and 5S). Interacts with RPS21. Interacts with several laminins including at least LAMB1. Interacts with MDK. The mature dimeric form interacts with PPP1R16B (via its fourth ankyrin repeat). Interacts with PPP1CA only in the presence of PPP1R16B.</text>
</comment>
<comment type="subcellular location">
    <subcellularLocation>
        <location evidence="1">Cell membrane</location>
    </subcellularLocation>
    <subcellularLocation>
        <location evidence="1">Cytoplasm</location>
    </subcellularLocation>
    <subcellularLocation>
        <location evidence="1">Nucleus</location>
    </subcellularLocation>
    <text evidence="1">67LR is found at the surface of the plasma membrane, with its C-terminal laminin-binding domain accessible to extracellular ligands. 37LRP is found at the cell surface, in the cytoplasm and in the nucleus. Co-localizes with PPP1R16B in the cell membrane.</text>
</comment>
<comment type="PTM">
    <text evidence="1">Acylated. Acylation may be a prerequisite for conversion of the monomeric 37 kDa laminin receptor precursor (37LRP) to the mature dimeric 67 kDa laminin receptor (67LR), and may provide a mechanism for membrane association.</text>
</comment>
<comment type="PTM">
    <text evidence="1">Cleaved by stromelysin-3 (ST3) at the cell surface. Cleavage by stromelysin-3 may be a mechanism to alter cell-extracellular matrix interactions.</text>
</comment>
<comment type="miscellaneous">
    <text evidence="1">This protein appears to have acquired a second function as a laminin receptor specifically in the vertebrate lineage.</text>
</comment>
<comment type="similarity">
    <text evidence="1 2">Belongs to the universal ribosomal protein uS2 family.</text>
</comment>
<organism>
    <name type="scientific">Homo sapiens</name>
    <name type="common">Human</name>
    <dbReference type="NCBI Taxonomy" id="9606"/>
    <lineage>
        <taxon>Eukaryota</taxon>
        <taxon>Metazoa</taxon>
        <taxon>Chordata</taxon>
        <taxon>Craniata</taxon>
        <taxon>Vertebrata</taxon>
        <taxon>Euteleostomi</taxon>
        <taxon>Mammalia</taxon>
        <taxon>Eutheria</taxon>
        <taxon>Euarchontoglires</taxon>
        <taxon>Primates</taxon>
        <taxon>Haplorrhini</taxon>
        <taxon>Catarrhini</taxon>
        <taxon>Hominidae</taxon>
        <taxon>Homo</taxon>
    </lineage>
</organism>
<sequence length="295" mass="32909">MSGALDVLQMKEEDVLKFLAAGTHLGGTNLDFQMEHYIYKRKSDGIYIINLKRTWEKLLLAARAIVAIENPADVSVISSRNTGQRAVLKFAAATGATPIAGRFTPGTFTNQIQAAFWEPRLLVVTDPRADHQPLTEASYVNLPTIALCNTDSPLRYVDIAIPCNNKGAHSVGLMWWMLAREVLRMRGTISREHPWEVMPDLYFYRDPEEIEKEEQAAAEKAVTKEEFQGEWTAPSPEFTATQPEVADWSEGVQVPSVPIQQFPTEDWSAQPATEDWSAAPTAQATEWVGATTDWS</sequence>
<reference key="1">
    <citation type="journal article" date="2004" name="Nature">
        <title>The DNA sequence and biology of human chromosome 19.</title>
        <authorList>
            <person name="Grimwood J."/>
            <person name="Gordon L.A."/>
            <person name="Olsen A.S."/>
            <person name="Terry A."/>
            <person name="Schmutz J."/>
            <person name="Lamerdin J.E."/>
            <person name="Hellsten U."/>
            <person name="Goodstein D."/>
            <person name="Couronne O."/>
            <person name="Tran-Gyamfi M."/>
            <person name="Aerts A."/>
            <person name="Altherr M."/>
            <person name="Ashworth L."/>
            <person name="Bajorek E."/>
            <person name="Black S."/>
            <person name="Branscomb E."/>
            <person name="Caenepeel S."/>
            <person name="Carrano A.V."/>
            <person name="Caoile C."/>
            <person name="Chan Y.M."/>
            <person name="Christensen M."/>
            <person name="Cleland C.A."/>
            <person name="Copeland A."/>
            <person name="Dalin E."/>
            <person name="Dehal P."/>
            <person name="Denys M."/>
            <person name="Detter J.C."/>
            <person name="Escobar J."/>
            <person name="Flowers D."/>
            <person name="Fotopulos D."/>
            <person name="Garcia C."/>
            <person name="Georgescu A.M."/>
            <person name="Glavina T."/>
            <person name="Gomez M."/>
            <person name="Gonzales E."/>
            <person name="Groza M."/>
            <person name="Hammon N."/>
            <person name="Hawkins T."/>
            <person name="Haydu L."/>
            <person name="Ho I."/>
            <person name="Huang W."/>
            <person name="Israni S."/>
            <person name="Jett J."/>
            <person name="Kadner K."/>
            <person name="Kimball H."/>
            <person name="Kobayashi A."/>
            <person name="Larionov V."/>
            <person name="Leem S.-H."/>
            <person name="Lopez F."/>
            <person name="Lou Y."/>
            <person name="Lowry S."/>
            <person name="Malfatti S."/>
            <person name="Martinez D."/>
            <person name="McCready P.M."/>
            <person name="Medina C."/>
            <person name="Morgan J."/>
            <person name="Nelson K."/>
            <person name="Nolan M."/>
            <person name="Ovcharenko I."/>
            <person name="Pitluck S."/>
            <person name="Pollard M."/>
            <person name="Popkie A.P."/>
            <person name="Predki P."/>
            <person name="Quan G."/>
            <person name="Ramirez L."/>
            <person name="Rash S."/>
            <person name="Retterer J."/>
            <person name="Rodriguez A."/>
            <person name="Rogers S."/>
            <person name="Salamov A."/>
            <person name="Salazar A."/>
            <person name="She X."/>
            <person name="Smith D."/>
            <person name="Slezak T."/>
            <person name="Solovyev V."/>
            <person name="Thayer N."/>
            <person name="Tice H."/>
            <person name="Tsai M."/>
            <person name="Ustaszewska A."/>
            <person name="Vo N."/>
            <person name="Wagner M."/>
            <person name="Wheeler J."/>
            <person name="Wu K."/>
            <person name="Xie G."/>
            <person name="Yang J."/>
            <person name="Dubchak I."/>
            <person name="Furey T.S."/>
            <person name="DeJong P."/>
            <person name="Dickson M."/>
            <person name="Gordon D."/>
            <person name="Eichler E.E."/>
            <person name="Pennacchio L.A."/>
            <person name="Richardson P."/>
            <person name="Stubbs L."/>
            <person name="Rokhsar D.S."/>
            <person name="Myers R.M."/>
            <person name="Rubin E.M."/>
            <person name="Lucas S.M."/>
        </authorList>
    </citation>
    <scope>NUCLEOTIDE SEQUENCE [LARGE SCALE GENOMIC DNA]</scope>
</reference>
<keyword id="KW-0007">Acetylation</keyword>
<keyword id="KW-1003">Cell membrane</keyword>
<keyword id="KW-0963">Cytoplasm</keyword>
<keyword id="KW-0472">Membrane</keyword>
<keyword id="KW-0539">Nucleus</keyword>
<keyword id="KW-1267">Proteomics identification</keyword>
<keyword id="KW-0675">Receptor</keyword>
<keyword id="KW-1185">Reference proteome</keyword>
<keyword id="KW-0677">Repeat</keyword>
<keyword id="KW-0687">Ribonucleoprotein</keyword>
<keyword id="KW-0689">Ribosomal protein</keyword>
<gene>
    <name evidence="5" type="primary">RPSA2</name>
    <name evidence="1" type="synonym">RPSA</name>
    <name type="synonym">RPSAP58</name>
</gene>
<proteinExistence type="evidence at protein level"/>
<accession>A0A8I5KQE6</accession>
<feature type="initiator methionine" description="Removed" evidence="1">
    <location>
        <position position="1"/>
    </location>
</feature>
<feature type="chain" id="PRO_0000457397" description="Small ribosomal subunit protein uS2B">
    <location>
        <begin position="2"/>
        <end position="295"/>
    </location>
</feature>
<feature type="repeat" description="[DE]-W-[ST] 1" evidence="1">
    <location>
        <begin position="230"/>
        <end position="232"/>
    </location>
</feature>
<feature type="repeat" description="[DE]-W-[ST] 2" evidence="1">
    <location>
        <begin position="247"/>
        <end position="249"/>
    </location>
</feature>
<feature type="repeat" description="[DE]-W-[ST] 3" evidence="1">
    <location>
        <begin position="266"/>
        <end position="268"/>
    </location>
</feature>
<feature type="repeat" description="[DE]-W-[ST] 4" evidence="1">
    <location>
        <begin position="275"/>
        <end position="277"/>
    </location>
</feature>
<feature type="repeat" description="[DE]-W-[ST] 5" evidence="1">
    <location>
        <begin position="293"/>
        <end position="295"/>
    </location>
</feature>
<feature type="region of interest" description="Interaction with PPP1R16B" evidence="1">
    <location>
        <begin position="54"/>
        <end position="113"/>
    </location>
</feature>
<feature type="region of interest" description="Laminin-binding" evidence="1">
    <location>
        <begin position="161"/>
        <end position="180"/>
    </location>
</feature>
<feature type="region of interest" description="Laminin-binding" evidence="1">
    <location>
        <begin position="205"/>
        <end position="229"/>
    </location>
</feature>
<feature type="region of interest" description="Disordered" evidence="3">
    <location>
        <begin position="218"/>
        <end position="242"/>
    </location>
</feature>
<feature type="region of interest" description="Laminin-binding" evidence="1">
    <location>
        <begin position="242"/>
        <end position="295"/>
    </location>
</feature>
<feature type="region of interest" description="Disordered" evidence="3">
    <location>
        <begin position="266"/>
        <end position="295"/>
    </location>
</feature>
<feature type="compositionally biased region" description="Basic and acidic residues" evidence="3">
    <location>
        <begin position="218"/>
        <end position="227"/>
    </location>
</feature>
<feature type="site" description="Cleavage; by ST3; site 1" evidence="1">
    <location>
        <begin position="115"/>
        <end position="116"/>
    </location>
</feature>
<feature type="site" description="Cleavage; by ST3; site 2" evidence="1">
    <location>
        <begin position="133"/>
        <end position="134"/>
    </location>
</feature>
<feature type="modified residue" description="N-acetylserine" evidence="1">
    <location>
        <position position="2"/>
    </location>
</feature>